<gene>
    <name evidence="1" type="primary">ttcA</name>
    <name type="ordered locus">NE1490</name>
</gene>
<name>TTCA_NITEU</name>
<feature type="chain" id="PRO_0000348776" description="tRNA-cytidine(32) 2-sulfurtransferase">
    <location>
        <begin position="1"/>
        <end position="314"/>
    </location>
</feature>
<feature type="short sequence motif" description="PP-loop motif" evidence="1">
    <location>
        <begin position="46"/>
        <end position="51"/>
    </location>
</feature>
<feature type="binding site" evidence="1">
    <location>
        <position position="121"/>
    </location>
    <ligand>
        <name>[4Fe-4S] cluster</name>
        <dbReference type="ChEBI" id="CHEBI:49883"/>
    </ligand>
</feature>
<feature type="binding site" evidence="1">
    <location>
        <position position="124"/>
    </location>
    <ligand>
        <name>[4Fe-4S] cluster</name>
        <dbReference type="ChEBI" id="CHEBI:49883"/>
    </ligand>
</feature>
<feature type="binding site" evidence="1">
    <location>
        <position position="212"/>
    </location>
    <ligand>
        <name>[4Fe-4S] cluster</name>
        <dbReference type="ChEBI" id="CHEBI:49883"/>
    </ligand>
</feature>
<protein>
    <recommendedName>
        <fullName evidence="1">tRNA-cytidine(32) 2-sulfurtransferase</fullName>
        <ecNumber evidence="1">2.8.1.-</ecNumber>
    </recommendedName>
    <alternativeName>
        <fullName evidence="1">Two-thiocytidine biosynthesis protein A</fullName>
    </alternativeName>
    <alternativeName>
        <fullName evidence="1">tRNA 2-thiocytidine biosynthesis protein TtcA</fullName>
    </alternativeName>
</protein>
<sequence length="314" mass="35320">MVTETLSRKADYNANKLRKRLRRLVGTAIADFNMIEKGDRVMVCLSGGKDSYALLDILRNLQAHAPLDFELIAVNLDQKQPGFPEHVLPGYLSEINMPFRIVEQDTYSVVKRVIAEGKTTCSLCSRLRRGVLYRVATELGATKIALGHHRDDILETFFLNMFYGGKLKAMPPKLVSDDGCHVVIRPLAYCKEKDLAAYAWHAQFPIIPCNLCGSQPNLQRQVIKEMMQQWDKKYPGRLETMFTALQNIQLSHLADTSRYDFVGLKPHGIAIEEGDKAFDEEPLSVIPVDMDHDDDSTFEPENEHDGGAVQGGVI</sequence>
<evidence type="ECO:0000255" key="1">
    <source>
        <dbReference type="HAMAP-Rule" id="MF_01850"/>
    </source>
</evidence>
<organism>
    <name type="scientific">Nitrosomonas europaea (strain ATCC 19718 / CIP 103999 / KCTC 2705 / NBRC 14298)</name>
    <dbReference type="NCBI Taxonomy" id="228410"/>
    <lineage>
        <taxon>Bacteria</taxon>
        <taxon>Pseudomonadati</taxon>
        <taxon>Pseudomonadota</taxon>
        <taxon>Betaproteobacteria</taxon>
        <taxon>Nitrosomonadales</taxon>
        <taxon>Nitrosomonadaceae</taxon>
        <taxon>Nitrosomonas</taxon>
    </lineage>
</organism>
<reference key="1">
    <citation type="journal article" date="2003" name="J. Bacteriol.">
        <title>Complete genome sequence of the ammonia-oxidizing bacterium and obligate chemolithoautotroph Nitrosomonas europaea.</title>
        <authorList>
            <person name="Chain P."/>
            <person name="Lamerdin J.E."/>
            <person name="Larimer F.W."/>
            <person name="Regala W."/>
            <person name="Lao V."/>
            <person name="Land M.L."/>
            <person name="Hauser L."/>
            <person name="Hooper A.B."/>
            <person name="Klotz M.G."/>
            <person name="Norton J."/>
            <person name="Sayavedra-Soto L.A."/>
            <person name="Arciero D.M."/>
            <person name="Hommes N.G."/>
            <person name="Whittaker M.M."/>
            <person name="Arp D.J."/>
        </authorList>
    </citation>
    <scope>NUCLEOTIDE SEQUENCE [LARGE SCALE GENOMIC DNA]</scope>
    <source>
        <strain>ATCC 19718 / CIP 103999 / KCTC 2705 / NBRC 14298</strain>
    </source>
</reference>
<proteinExistence type="inferred from homology"/>
<accession>Q82UJ4</accession>
<dbReference type="EC" id="2.8.1.-" evidence="1"/>
<dbReference type="EMBL" id="AL954747">
    <property type="protein sequence ID" value="CAD85401.1"/>
    <property type="molecule type" value="Genomic_DNA"/>
</dbReference>
<dbReference type="RefSeq" id="WP_011112058.1">
    <property type="nucleotide sequence ID" value="NC_004757.1"/>
</dbReference>
<dbReference type="SMR" id="Q82UJ4"/>
<dbReference type="STRING" id="228410.NE1490"/>
<dbReference type="DNASU" id="1082441"/>
<dbReference type="GeneID" id="87104664"/>
<dbReference type="KEGG" id="neu:NE1490"/>
<dbReference type="eggNOG" id="COG0037">
    <property type="taxonomic scope" value="Bacteria"/>
</dbReference>
<dbReference type="HOGENOM" id="CLU_026481_0_0_4"/>
<dbReference type="OrthoDB" id="9801054at2"/>
<dbReference type="PhylomeDB" id="Q82UJ4"/>
<dbReference type="Proteomes" id="UP000001416">
    <property type="component" value="Chromosome"/>
</dbReference>
<dbReference type="GO" id="GO:0005737">
    <property type="term" value="C:cytoplasm"/>
    <property type="evidence" value="ECO:0007669"/>
    <property type="project" value="UniProtKB-SubCell"/>
</dbReference>
<dbReference type="GO" id="GO:0051539">
    <property type="term" value="F:4 iron, 4 sulfur cluster binding"/>
    <property type="evidence" value="ECO:0007669"/>
    <property type="project" value="UniProtKB-UniRule"/>
</dbReference>
<dbReference type="GO" id="GO:0005524">
    <property type="term" value="F:ATP binding"/>
    <property type="evidence" value="ECO:0007669"/>
    <property type="project" value="UniProtKB-UniRule"/>
</dbReference>
<dbReference type="GO" id="GO:0000287">
    <property type="term" value="F:magnesium ion binding"/>
    <property type="evidence" value="ECO:0007669"/>
    <property type="project" value="UniProtKB-UniRule"/>
</dbReference>
<dbReference type="GO" id="GO:0016783">
    <property type="term" value="F:sulfurtransferase activity"/>
    <property type="evidence" value="ECO:0007669"/>
    <property type="project" value="UniProtKB-UniRule"/>
</dbReference>
<dbReference type="GO" id="GO:0000049">
    <property type="term" value="F:tRNA binding"/>
    <property type="evidence" value="ECO:0007669"/>
    <property type="project" value="UniProtKB-KW"/>
</dbReference>
<dbReference type="GO" id="GO:0034227">
    <property type="term" value="P:tRNA thio-modification"/>
    <property type="evidence" value="ECO:0007669"/>
    <property type="project" value="UniProtKB-UniRule"/>
</dbReference>
<dbReference type="CDD" id="cd24138">
    <property type="entry name" value="TtcA-like"/>
    <property type="match status" value="1"/>
</dbReference>
<dbReference type="Gene3D" id="3.40.50.620">
    <property type="entry name" value="HUPs"/>
    <property type="match status" value="1"/>
</dbReference>
<dbReference type="HAMAP" id="MF_01850">
    <property type="entry name" value="TtcA"/>
    <property type="match status" value="1"/>
</dbReference>
<dbReference type="InterPro" id="IPR014729">
    <property type="entry name" value="Rossmann-like_a/b/a_fold"/>
</dbReference>
<dbReference type="InterPro" id="IPR011063">
    <property type="entry name" value="TilS/TtcA_N"/>
</dbReference>
<dbReference type="InterPro" id="IPR012089">
    <property type="entry name" value="tRNA_Cyd_32_2_STrfase"/>
</dbReference>
<dbReference type="NCBIfam" id="NF007972">
    <property type="entry name" value="PRK10696.1"/>
    <property type="match status" value="1"/>
</dbReference>
<dbReference type="PANTHER" id="PTHR43686:SF1">
    <property type="entry name" value="AMINOTRAN_5 DOMAIN-CONTAINING PROTEIN"/>
    <property type="match status" value="1"/>
</dbReference>
<dbReference type="PANTHER" id="PTHR43686">
    <property type="entry name" value="SULFURTRANSFERASE-RELATED"/>
    <property type="match status" value="1"/>
</dbReference>
<dbReference type="Pfam" id="PF01171">
    <property type="entry name" value="ATP_bind_3"/>
    <property type="match status" value="1"/>
</dbReference>
<dbReference type="SUPFAM" id="SSF52402">
    <property type="entry name" value="Adenine nucleotide alpha hydrolases-like"/>
    <property type="match status" value="1"/>
</dbReference>
<comment type="function">
    <text evidence="1">Catalyzes the ATP-dependent 2-thiolation of cytidine in position 32 of tRNA, to form 2-thiocytidine (s(2)C32). The sulfur atoms are provided by the cysteine/cysteine desulfurase (IscS) system.</text>
</comment>
<comment type="catalytic activity">
    <reaction evidence="1">
        <text>cytidine(32) in tRNA + S-sulfanyl-L-cysteinyl-[cysteine desulfurase] + AH2 + ATP = 2-thiocytidine(32) in tRNA + L-cysteinyl-[cysteine desulfurase] + A + AMP + diphosphate + H(+)</text>
        <dbReference type="Rhea" id="RHEA:57048"/>
        <dbReference type="Rhea" id="RHEA-COMP:10288"/>
        <dbReference type="Rhea" id="RHEA-COMP:12157"/>
        <dbReference type="Rhea" id="RHEA-COMP:12158"/>
        <dbReference type="Rhea" id="RHEA-COMP:14821"/>
        <dbReference type="ChEBI" id="CHEBI:13193"/>
        <dbReference type="ChEBI" id="CHEBI:15378"/>
        <dbReference type="ChEBI" id="CHEBI:17499"/>
        <dbReference type="ChEBI" id="CHEBI:29950"/>
        <dbReference type="ChEBI" id="CHEBI:30616"/>
        <dbReference type="ChEBI" id="CHEBI:33019"/>
        <dbReference type="ChEBI" id="CHEBI:61963"/>
        <dbReference type="ChEBI" id="CHEBI:82748"/>
        <dbReference type="ChEBI" id="CHEBI:141453"/>
        <dbReference type="ChEBI" id="CHEBI:456215"/>
    </reaction>
    <physiologicalReaction direction="left-to-right" evidence="1">
        <dbReference type="Rhea" id="RHEA:57049"/>
    </physiologicalReaction>
</comment>
<comment type="cofactor">
    <cofactor evidence="1">
        <name>Mg(2+)</name>
        <dbReference type="ChEBI" id="CHEBI:18420"/>
    </cofactor>
</comment>
<comment type="cofactor">
    <cofactor evidence="1">
        <name>[4Fe-4S] cluster</name>
        <dbReference type="ChEBI" id="CHEBI:49883"/>
    </cofactor>
    <text evidence="1">Binds 1 [4Fe-4S] cluster per subunit. The cluster is chelated by three Cys residues, the fourth Fe has a free coordination site that may bind a sulfur atom transferred from the persulfide of IscS.</text>
</comment>
<comment type="pathway">
    <text evidence="1">tRNA modification.</text>
</comment>
<comment type="subunit">
    <text evidence="1">Homodimer.</text>
</comment>
<comment type="subcellular location">
    <subcellularLocation>
        <location evidence="1">Cytoplasm</location>
    </subcellularLocation>
</comment>
<comment type="miscellaneous">
    <text evidence="1">The thiolation reaction likely consists of two steps: a first activation step by ATP to form an adenylated intermediate of the target base of tRNA, and a second nucleophilic substitution step of the sulfur (S) atom supplied by the hydrosulfide attached to the Fe-S cluster.</text>
</comment>
<comment type="similarity">
    <text evidence="1">Belongs to the TtcA family.</text>
</comment>
<keyword id="KW-0004">4Fe-4S</keyword>
<keyword id="KW-0067">ATP-binding</keyword>
<keyword id="KW-0963">Cytoplasm</keyword>
<keyword id="KW-0408">Iron</keyword>
<keyword id="KW-0411">Iron-sulfur</keyword>
<keyword id="KW-0460">Magnesium</keyword>
<keyword id="KW-0479">Metal-binding</keyword>
<keyword id="KW-0547">Nucleotide-binding</keyword>
<keyword id="KW-1185">Reference proteome</keyword>
<keyword id="KW-0694">RNA-binding</keyword>
<keyword id="KW-0808">Transferase</keyword>
<keyword id="KW-0819">tRNA processing</keyword>
<keyword id="KW-0820">tRNA-binding</keyword>